<reference key="1">
    <citation type="journal article" date="2001" name="Nature">
        <title>Genome sequence of enterohaemorrhagic Escherichia coli O157:H7.</title>
        <authorList>
            <person name="Perna N.T."/>
            <person name="Plunkett G. III"/>
            <person name="Burland V."/>
            <person name="Mau B."/>
            <person name="Glasner J.D."/>
            <person name="Rose D.J."/>
            <person name="Mayhew G.F."/>
            <person name="Evans P.S."/>
            <person name="Gregor J."/>
            <person name="Kirkpatrick H.A."/>
            <person name="Posfai G."/>
            <person name="Hackett J."/>
            <person name="Klink S."/>
            <person name="Boutin A."/>
            <person name="Shao Y."/>
            <person name="Miller L."/>
            <person name="Grotbeck E.J."/>
            <person name="Davis N.W."/>
            <person name="Lim A."/>
            <person name="Dimalanta E.T."/>
            <person name="Potamousis K."/>
            <person name="Apodaca J."/>
            <person name="Anantharaman T.S."/>
            <person name="Lin J."/>
            <person name="Yen G."/>
            <person name="Schwartz D.C."/>
            <person name="Welch R.A."/>
            <person name="Blattner F.R."/>
        </authorList>
    </citation>
    <scope>NUCLEOTIDE SEQUENCE [LARGE SCALE GENOMIC DNA]</scope>
    <source>
        <strain>O157:H7 / EDL933 / ATCC 700927 / EHEC</strain>
    </source>
</reference>
<reference key="2">
    <citation type="journal article" date="2001" name="DNA Res.">
        <title>Complete genome sequence of enterohemorrhagic Escherichia coli O157:H7 and genomic comparison with a laboratory strain K-12.</title>
        <authorList>
            <person name="Hayashi T."/>
            <person name="Makino K."/>
            <person name="Ohnishi M."/>
            <person name="Kurokawa K."/>
            <person name="Ishii K."/>
            <person name="Yokoyama K."/>
            <person name="Han C.-G."/>
            <person name="Ohtsubo E."/>
            <person name="Nakayama K."/>
            <person name="Murata T."/>
            <person name="Tanaka M."/>
            <person name="Tobe T."/>
            <person name="Iida T."/>
            <person name="Takami H."/>
            <person name="Honda T."/>
            <person name="Sasakawa C."/>
            <person name="Ogasawara N."/>
            <person name="Yasunaga T."/>
            <person name="Kuhara S."/>
            <person name="Shiba T."/>
            <person name="Hattori M."/>
            <person name="Shinagawa H."/>
        </authorList>
    </citation>
    <scope>NUCLEOTIDE SEQUENCE [LARGE SCALE GENOMIC DNA]</scope>
    <source>
        <strain>O157:H7 / Sakai / RIMD 0509952 / EHEC</strain>
    </source>
</reference>
<organism>
    <name type="scientific">Escherichia coli O157:H7</name>
    <dbReference type="NCBI Taxonomy" id="83334"/>
    <lineage>
        <taxon>Bacteria</taxon>
        <taxon>Pseudomonadati</taxon>
        <taxon>Pseudomonadota</taxon>
        <taxon>Gammaproteobacteria</taxon>
        <taxon>Enterobacterales</taxon>
        <taxon>Enterobacteriaceae</taxon>
        <taxon>Escherichia</taxon>
    </lineage>
</organism>
<proteinExistence type="inferred from homology"/>
<dbReference type="EC" id="7.1.1.7" evidence="2"/>
<dbReference type="EMBL" id="AE005174">
    <property type="protein sequence ID" value="AAG55070.1"/>
    <property type="molecule type" value="Genomic_DNA"/>
</dbReference>
<dbReference type="EMBL" id="BA000007">
    <property type="protein sequence ID" value="BAB34192.1"/>
    <property type="molecule type" value="Genomic_DNA"/>
</dbReference>
<dbReference type="PIR" id="A99725">
    <property type="entry name" value="A99725"/>
</dbReference>
<dbReference type="PIR" id="B85576">
    <property type="entry name" value="B85576"/>
</dbReference>
<dbReference type="RefSeq" id="NP_308796.1">
    <property type="nucleotide sequence ID" value="NC_002695.1"/>
</dbReference>
<dbReference type="RefSeq" id="WP_000568275.1">
    <property type="nucleotide sequence ID" value="NZ_VOAI01000019.1"/>
</dbReference>
<dbReference type="SMR" id="P0ABK4"/>
<dbReference type="STRING" id="155864.Z0901"/>
<dbReference type="GeneID" id="917500"/>
<dbReference type="GeneID" id="93776751"/>
<dbReference type="KEGG" id="ece:Z0901"/>
<dbReference type="KEGG" id="ecs:ECs_0769"/>
<dbReference type="PATRIC" id="fig|386585.9.peg.887"/>
<dbReference type="eggNOG" id="COG1294">
    <property type="taxonomic scope" value="Bacteria"/>
</dbReference>
<dbReference type="HOGENOM" id="CLU_049294_0_0_6"/>
<dbReference type="OMA" id="FLPQVWF"/>
<dbReference type="UniPathway" id="UPA00705"/>
<dbReference type="Proteomes" id="UP000000558">
    <property type="component" value="Chromosome"/>
</dbReference>
<dbReference type="Proteomes" id="UP000002519">
    <property type="component" value="Chromosome"/>
</dbReference>
<dbReference type="GO" id="GO:0070069">
    <property type="term" value="C:cytochrome complex"/>
    <property type="evidence" value="ECO:0007669"/>
    <property type="project" value="TreeGrafter"/>
</dbReference>
<dbReference type="GO" id="GO:0005886">
    <property type="term" value="C:plasma membrane"/>
    <property type="evidence" value="ECO:0007669"/>
    <property type="project" value="UniProtKB-SubCell"/>
</dbReference>
<dbReference type="GO" id="GO:0009055">
    <property type="term" value="F:electron transfer activity"/>
    <property type="evidence" value="ECO:0007669"/>
    <property type="project" value="TreeGrafter"/>
</dbReference>
<dbReference type="GO" id="GO:0046872">
    <property type="term" value="F:metal ion binding"/>
    <property type="evidence" value="ECO:0007669"/>
    <property type="project" value="UniProtKB-KW"/>
</dbReference>
<dbReference type="GO" id="GO:0016682">
    <property type="term" value="F:oxidoreductase activity, acting on diphenols and related substances as donors, oxygen as acceptor"/>
    <property type="evidence" value="ECO:0007669"/>
    <property type="project" value="TreeGrafter"/>
</dbReference>
<dbReference type="GO" id="GO:0019646">
    <property type="term" value="P:aerobic electron transport chain"/>
    <property type="evidence" value="ECO:0007669"/>
    <property type="project" value="TreeGrafter"/>
</dbReference>
<dbReference type="InterPro" id="IPR003317">
    <property type="entry name" value="Cyt-d_oxidase_su2"/>
</dbReference>
<dbReference type="NCBIfam" id="TIGR00203">
    <property type="entry name" value="cydB"/>
    <property type="match status" value="1"/>
</dbReference>
<dbReference type="NCBIfam" id="NF011579">
    <property type="entry name" value="PRK15003.1"/>
    <property type="match status" value="1"/>
</dbReference>
<dbReference type="PANTHER" id="PTHR43141:SF5">
    <property type="entry name" value="CYTOCHROME BD-I UBIQUINOL OXIDASE SUBUNIT 2"/>
    <property type="match status" value="1"/>
</dbReference>
<dbReference type="PANTHER" id="PTHR43141">
    <property type="entry name" value="CYTOCHROME BD2 SUBUNIT II"/>
    <property type="match status" value="1"/>
</dbReference>
<dbReference type="Pfam" id="PF02322">
    <property type="entry name" value="Cyt_bd_oxida_II"/>
    <property type="match status" value="1"/>
</dbReference>
<dbReference type="PIRSF" id="PIRSF000267">
    <property type="entry name" value="Cyt_oxidse_sub2"/>
    <property type="match status" value="1"/>
</dbReference>
<accession>P0ABK4</accession>
<accession>P11027</accession>
<comment type="function">
    <text evidence="2">A terminal oxidase that produces a proton motive force by the vectorial transfer of protons across the inner membrane. It is the component of the aerobic respiratory chain of E.coli that predominates when cells are grown at low aeration. Generates a proton motive force using protons and electrons from opposite sides of the membrane to generate H(2)O, transferring 1 proton/electron.</text>
</comment>
<comment type="catalytic activity">
    <reaction evidence="2">
        <text>2 a ubiquinol + O2(in) + 4 H(+)(in) = 2 a ubiquinone + 2 H2O(in) + 4 H(+)(out)</text>
        <dbReference type="Rhea" id="RHEA:40527"/>
        <dbReference type="Rhea" id="RHEA-COMP:9565"/>
        <dbReference type="Rhea" id="RHEA-COMP:9566"/>
        <dbReference type="ChEBI" id="CHEBI:15377"/>
        <dbReference type="ChEBI" id="CHEBI:15378"/>
        <dbReference type="ChEBI" id="CHEBI:15379"/>
        <dbReference type="ChEBI" id="CHEBI:16389"/>
        <dbReference type="ChEBI" id="CHEBI:17976"/>
        <dbReference type="EC" id="7.1.1.7"/>
    </reaction>
</comment>
<comment type="cofactor">
    <cofactor evidence="2">
        <name>heme b</name>
        <dbReference type="ChEBI" id="CHEBI:60344"/>
    </cofactor>
    <text evidence="2">Binds 1 protoheme IX center (heme b595) per heterodimer, in conjunction with CydA.</text>
</comment>
<comment type="cofactor">
    <cofactor evidence="2">
        <name>heme d cis-diol</name>
        <dbReference type="ChEBI" id="CHEBI:62814"/>
    </cofactor>
    <text evidence="2">Binds 1 iron-chlorin (heme d or cytochrome d) per heterodimer, in conjunction with CydA.</text>
</comment>
<comment type="pathway">
    <text>Energy metabolism; oxidative phosphorylation.</text>
</comment>
<comment type="subunit">
    <text evidence="2">Heterodimer of subunits I and II.</text>
</comment>
<comment type="subcellular location">
    <subcellularLocation>
        <location evidence="2">Cell inner membrane</location>
        <topology evidence="2">Multi-pass membrane protein</topology>
    </subcellularLocation>
</comment>
<comment type="similarity">
    <text evidence="3">Belongs to the cytochrome ubiquinol oxidase subunit 2 family.</text>
</comment>
<keyword id="KW-0997">Cell inner membrane</keyword>
<keyword id="KW-1003">Cell membrane</keyword>
<keyword id="KW-0249">Electron transport</keyword>
<keyword id="KW-0291">Formylation</keyword>
<keyword id="KW-0349">Heme</keyword>
<keyword id="KW-0408">Iron</keyword>
<keyword id="KW-0472">Membrane</keyword>
<keyword id="KW-0479">Metal-binding</keyword>
<keyword id="KW-1185">Reference proteome</keyword>
<keyword id="KW-1278">Translocase</keyword>
<keyword id="KW-0812">Transmembrane</keyword>
<keyword id="KW-1133">Transmembrane helix</keyword>
<keyword id="KW-0813">Transport</keyword>
<feature type="chain" id="PRO_0000183926" description="Cytochrome bd-I ubiquinol oxidase subunit 2">
    <location>
        <begin position="1"/>
        <end position="379"/>
    </location>
</feature>
<feature type="topological domain" description="Cytoplasmic" evidence="3">
    <location>
        <begin position="1"/>
        <end position="8"/>
    </location>
</feature>
<feature type="transmembrane region" description="Helical" evidence="3">
    <location>
        <begin position="9"/>
        <end position="28"/>
    </location>
</feature>
<feature type="topological domain" description="Periplasmic" evidence="3">
    <location>
        <begin position="29"/>
        <end position="79"/>
    </location>
</feature>
<feature type="transmembrane region" description="Helical" evidence="3">
    <location>
        <begin position="80"/>
        <end position="99"/>
    </location>
</feature>
<feature type="topological domain" description="Cytoplasmic" evidence="3">
    <location>
        <begin position="100"/>
        <end position="122"/>
    </location>
</feature>
<feature type="transmembrane region" description="Helical" evidence="3">
    <location>
        <begin position="123"/>
        <end position="142"/>
    </location>
</feature>
<feature type="topological domain" description="Periplasmic" evidence="3">
    <location>
        <begin position="143"/>
        <end position="164"/>
    </location>
</feature>
<feature type="transmembrane region" description="Helical" evidence="3">
    <location>
        <begin position="165"/>
        <end position="184"/>
    </location>
</feature>
<feature type="topological domain" description="Cytoplasmic" evidence="3">
    <location>
        <begin position="185"/>
        <end position="205"/>
    </location>
</feature>
<feature type="transmembrane region" description="Helical" evidence="3">
    <location>
        <begin position="206"/>
        <end position="225"/>
    </location>
</feature>
<feature type="topological domain" description="Periplasmic" evidence="3">
    <location>
        <begin position="226"/>
        <end position="262"/>
    </location>
</feature>
<feature type="transmembrane region" description="Helical" evidence="3">
    <location>
        <begin position="263"/>
        <end position="282"/>
    </location>
</feature>
<feature type="topological domain" description="Cytoplasmic" evidence="3">
    <location>
        <begin position="283"/>
        <end position="292"/>
    </location>
</feature>
<feature type="transmembrane region" description="Helical" evidence="3">
    <location>
        <begin position="293"/>
        <end position="312"/>
    </location>
</feature>
<feature type="topological domain" description="Periplasmic" evidence="3">
    <location>
        <begin position="313"/>
        <end position="336"/>
    </location>
</feature>
<feature type="transmembrane region" description="Helical" evidence="3">
    <location>
        <begin position="337"/>
        <end position="356"/>
    </location>
</feature>
<feature type="topological domain" description="Cytoplasmic" evidence="3">
    <location>
        <begin position="357"/>
        <end position="379"/>
    </location>
</feature>
<feature type="modified residue" description="N-formylmethionine" evidence="1">
    <location>
        <position position="1"/>
    </location>
</feature>
<name>CYDB_ECO57</name>
<gene>
    <name type="primary">cydB</name>
    <name type="ordered locus">Z0901</name>
    <name type="ordered locus">ECs0769</name>
</gene>
<sequence>MIDYEVLRFIWWLLVGVLLIGFAVTDGFDMGVGMLTRFLGRNDTERRIMINSIAPHWDGNQVWLITAGGALFAAWPMVYAAAFSGFYVAMILVLASLFFRPVGFDYRSKIEETRWRNMWDWGIFIGSFVPPLVIGVAFGNLLQGVPFNVDEYLRLYYTGNFFQLLNPFGLLAGVVSVGMIITQGATYLQMRTVGELHLRTRATAQVAALVTLVCFALAGVWVMYGIDGYVVKSTMDHYAASNPLNKEVVREAGAWLVNFNNTPILWAIPALGVVLPLLTILTARMDKAAWAFVFSSLTLACIILTAGIAMFPFVMPSSTMMNASLTMWDATSSQLTLNVMTWVAVVLVPIILLYTAWCYWKMFGRITKEDIERNTHSLY</sequence>
<evidence type="ECO:0000250" key="1"/>
<evidence type="ECO:0000250" key="2">
    <source>
        <dbReference type="UniProtKB" id="P0ABK2"/>
    </source>
</evidence>
<evidence type="ECO:0000305" key="3"/>
<protein>
    <recommendedName>
        <fullName>Cytochrome bd-I ubiquinol oxidase subunit 2</fullName>
        <ecNumber evidence="2">7.1.1.7</ecNumber>
    </recommendedName>
    <alternativeName>
        <fullName>Cytochrome bd-I oxidase subunit II</fullName>
    </alternativeName>
    <alternativeName>
        <fullName>Cytochrome d ubiquinol oxidase subunit II</fullName>
    </alternativeName>
</protein>